<feature type="chain" id="PRO_0000178324" description="Small ribosomal subunit protein bS21">
    <location>
        <begin position="1"/>
        <end position="65"/>
    </location>
</feature>
<feature type="region of interest" description="Disordered" evidence="2">
    <location>
        <begin position="46"/>
        <end position="65"/>
    </location>
</feature>
<feature type="compositionally biased region" description="Basic residues" evidence="2">
    <location>
        <begin position="46"/>
        <end position="57"/>
    </location>
</feature>
<reference key="1">
    <citation type="journal article" date="2002" name="Proc. Natl. Acad. Sci. U.S.A.">
        <title>The complete genome sequence of Chlorobium tepidum TLS, a photosynthetic, anaerobic, green-sulfur bacterium.</title>
        <authorList>
            <person name="Eisen J.A."/>
            <person name="Nelson K.E."/>
            <person name="Paulsen I.T."/>
            <person name="Heidelberg J.F."/>
            <person name="Wu M."/>
            <person name="Dodson R.J."/>
            <person name="DeBoy R.T."/>
            <person name="Gwinn M.L."/>
            <person name="Nelson W.C."/>
            <person name="Haft D.H."/>
            <person name="Hickey E.K."/>
            <person name="Peterson J.D."/>
            <person name="Durkin A.S."/>
            <person name="Kolonay J.F."/>
            <person name="Yang F."/>
            <person name="Holt I.E."/>
            <person name="Umayam L.A."/>
            <person name="Mason T.M."/>
            <person name="Brenner M."/>
            <person name="Shea T.P."/>
            <person name="Parksey D.S."/>
            <person name="Nierman W.C."/>
            <person name="Feldblyum T.V."/>
            <person name="Hansen C.L."/>
            <person name="Craven M.B."/>
            <person name="Radune D."/>
            <person name="Vamathevan J.J."/>
            <person name="Khouri H.M."/>
            <person name="White O."/>
            <person name="Gruber T.M."/>
            <person name="Ketchum K.A."/>
            <person name="Venter J.C."/>
            <person name="Tettelin H."/>
            <person name="Bryant D.A."/>
            <person name="Fraser C.M."/>
        </authorList>
    </citation>
    <scope>NUCLEOTIDE SEQUENCE [LARGE SCALE GENOMIC DNA]</scope>
    <source>
        <strain>ATCC 49652 / DSM 12025 / NBRC 103806 / TLS</strain>
    </source>
</reference>
<protein>
    <recommendedName>
        <fullName evidence="1">Small ribosomal subunit protein bS21</fullName>
    </recommendedName>
    <alternativeName>
        <fullName evidence="3">30S ribosomal protein S21</fullName>
    </alternativeName>
</protein>
<comment type="similarity">
    <text evidence="1">Belongs to the bacterial ribosomal protein bS21 family.</text>
</comment>
<name>RS21_CHLTE</name>
<sequence length="65" mass="7884">MVSVQVNENESIDKLLKRFKKKYERAGVLKEFRKKAYFVKPSIEKRLKRSRSKRRAQRANEERNS</sequence>
<accession>Q8KB70</accession>
<organism>
    <name type="scientific">Chlorobaculum tepidum (strain ATCC 49652 / DSM 12025 / NBRC 103806 / TLS)</name>
    <name type="common">Chlorobium tepidum</name>
    <dbReference type="NCBI Taxonomy" id="194439"/>
    <lineage>
        <taxon>Bacteria</taxon>
        <taxon>Pseudomonadati</taxon>
        <taxon>Chlorobiota</taxon>
        <taxon>Chlorobiia</taxon>
        <taxon>Chlorobiales</taxon>
        <taxon>Chlorobiaceae</taxon>
        <taxon>Chlorobaculum</taxon>
    </lineage>
</organism>
<gene>
    <name evidence="1" type="primary">rpsU</name>
    <name type="ordered locus">CT1919</name>
</gene>
<dbReference type="EMBL" id="AE006470">
    <property type="protein sequence ID" value="AAM73138.1"/>
    <property type="molecule type" value="Genomic_DNA"/>
</dbReference>
<dbReference type="RefSeq" id="NP_662796.1">
    <property type="nucleotide sequence ID" value="NC_002932.3"/>
</dbReference>
<dbReference type="RefSeq" id="WP_010933577.1">
    <property type="nucleotide sequence ID" value="NC_002932.3"/>
</dbReference>
<dbReference type="SMR" id="Q8KB70"/>
<dbReference type="STRING" id="194439.CT1919"/>
<dbReference type="EnsemblBacteria" id="AAM73138">
    <property type="protein sequence ID" value="AAM73138"/>
    <property type="gene ID" value="CT1919"/>
</dbReference>
<dbReference type="KEGG" id="cte:CT1919"/>
<dbReference type="PATRIC" id="fig|194439.7.peg.1738"/>
<dbReference type="eggNOG" id="COG0828">
    <property type="taxonomic scope" value="Bacteria"/>
</dbReference>
<dbReference type="HOGENOM" id="CLU_159258_2_1_10"/>
<dbReference type="OrthoDB" id="598353at2"/>
<dbReference type="Proteomes" id="UP000001007">
    <property type="component" value="Chromosome"/>
</dbReference>
<dbReference type="GO" id="GO:1990904">
    <property type="term" value="C:ribonucleoprotein complex"/>
    <property type="evidence" value="ECO:0007669"/>
    <property type="project" value="UniProtKB-KW"/>
</dbReference>
<dbReference type="GO" id="GO:0005840">
    <property type="term" value="C:ribosome"/>
    <property type="evidence" value="ECO:0007669"/>
    <property type="project" value="UniProtKB-KW"/>
</dbReference>
<dbReference type="GO" id="GO:0003735">
    <property type="term" value="F:structural constituent of ribosome"/>
    <property type="evidence" value="ECO:0007669"/>
    <property type="project" value="InterPro"/>
</dbReference>
<dbReference type="GO" id="GO:0006412">
    <property type="term" value="P:translation"/>
    <property type="evidence" value="ECO:0007669"/>
    <property type="project" value="UniProtKB-UniRule"/>
</dbReference>
<dbReference type="Gene3D" id="1.20.5.1150">
    <property type="entry name" value="Ribosomal protein S8"/>
    <property type="match status" value="1"/>
</dbReference>
<dbReference type="HAMAP" id="MF_00358">
    <property type="entry name" value="Ribosomal_bS21"/>
    <property type="match status" value="1"/>
</dbReference>
<dbReference type="InterPro" id="IPR001911">
    <property type="entry name" value="Ribosomal_bS21"/>
</dbReference>
<dbReference type="InterPro" id="IPR038380">
    <property type="entry name" value="Ribosomal_bS21_sf"/>
</dbReference>
<dbReference type="NCBIfam" id="TIGR00030">
    <property type="entry name" value="S21p"/>
    <property type="match status" value="1"/>
</dbReference>
<dbReference type="Pfam" id="PF01165">
    <property type="entry name" value="Ribosomal_S21"/>
    <property type="match status" value="1"/>
</dbReference>
<dbReference type="PRINTS" id="PR00976">
    <property type="entry name" value="RIBOSOMALS21"/>
</dbReference>
<proteinExistence type="inferred from homology"/>
<keyword id="KW-1185">Reference proteome</keyword>
<keyword id="KW-0687">Ribonucleoprotein</keyword>
<keyword id="KW-0689">Ribosomal protein</keyword>
<evidence type="ECO:0000255" key="1">
    <source>
        <dbReference type="HAMAP-Rule" id="MF_00358"/>
    </source>
</evidence>
<evidence type="ECO:0000256" key="2">
    <source>
        <dbReference type="SAM" id="MobiDB-lite"/>
    </source>
</evidence>
<evidence type="ECO:0000305" key="3"/>